<sequence>MAQVSMRDMLNAGVHYGHQTRYWNPKMKPFIFGARNGVHVINLEKTLPLFNEALAELTRISSNNGKILFVGTKRAASEAVKAAAVDCQQFYVNHRWLGGMLTNWKTVRQSIKRLKDLETQTQDGTFDKITKKEALMRTRELEKLELSLGGIKDMAGLPDAIFVIGADHEHIAIKEANNLGIPVFAIVDTNSTPDGVNYIIPGNDDATRAIQLYLDAAAAAVKEGRGSNVEAELEATAE</sequence>
<protein>
    <recommendedName>
        <fullName evidence="1">Small ribosomal subunit protein uS2</fullName>
    </recommendedName>
    <alternativeName>
        <fullName evidence="2">30S ribosomal protein S2</fullName>
    </alternativeName>
</protein>
<accession>B0BUC4</accession>
<reference key="1">
    <citation type="journal article" date="2008" name="PLoS ONE">
        <title>Genome biology of Actinobacillus pleuropneumoniae JL03, an isolate of serotype 3 prevalent in China.</title>
        <authorList>
            <person name="Xu Z."/>
            <person name="Zhou Y."/>
            <person name="Li L."/>
            <person name="Zhou R."/>
            <person name="Xiao S."/>
            <person name="Wan Y."/>
            <person name="Zhang S."/>
            <person name="Wang K."/>
            <person name="Li W."/>
            <person name="Li L."/>
            <person name="Jin H."/>
            <person name="Kang M."/>
            <person name="Dalai B."/>
            <person name="Li T."/>
            <person name="Liu L."/>
            <person name="Cheng Y."/>
            <person name="Zhang L."/>
            <person name="Xu T."/>
            <person name="Zheng H."/>
            <person name="Pu S."/>
            <person name="Wang B."/>
            <person name="Gu W."/>
            <person name="Zhang X.L."/>
            <person name="Zhu G.-F."/>
            <person name="Wang S."/>
            <person name="Zhao G.-P."/>
            <person name="Chen H."/>
        </authorList>
    </citation>
    <scope>NUCLEOTIDE SEQUENCE [LARGE SCALE GENOMIC DNA]</scope>
    <source>
        <strain>JL03</strain>
    </source>
</reference>
<name>RS2_ACTPJ</name>
<organism>
    <name type="scientific">Actinobacillus pleuropneumoniae serotype 3 (strain JL03)</name>
    <dbReference type="NCBI Taxonomy" id="434271"/>
    <lineage>
        <taxon>Bacteria</taxon>
        <taxon>Pseudomonadati</taxon>
        <taxon>Pseudomonadota</taxon>
        <taxon>Gammaproteobacteria</taxon>
        <taxon>Pasteurellales</taxon>
        <taxon>Pasteurellaceae</taxon>
        <taxon>Actinobacillus</taxon>
    </lineage>
</organism>
<proteinExistence type="inferred from homology"/>
<keyword id="KW-0687">Ribonucleoprotein</keyword>
<keyword id="KW-0689">Ribosomal protein</keyword>
<feature type="chain" id="PRO_1000114986" description="Small ribosomal subunit protein uS2">
    <location>
        <begin position="1"/>
        <end position="238"/>
    </location>
</feature>
<dbReference type="EMBL" id="CP000687">
    <property type="protein sequence ID" value="ABY69129.1"/>
    <property type="molecule type" value="Genomic_DNA"/>
</dbReference>
<dbReference type="RefSeq" id="WP_005603942.1">
    <property type="nucleotide sequence ID" value="NC_010278.1"/>
</dbReference>
<dbReference type="SMR" id="B0BUC4"/>
<dbReference type="KEGG" id="apj:APJL_0559"/>
<dbReference type="HOGENOM" id="CLU_040318_1_2_6"/>
<dbReference type="Proteomes" id="UP000008547">
    <property type="component" value="Chromosome"/>
</dbReference>
<dbReference type="GO" id="GO:0022627">
    <property type="term" value="C:cytosolic small ribosomal subunit"/>
    <property type="evidence" value="ECO:0007669"/>
    <property type="project" value="TreeGrafter"/>
</dbReference>
<dbReference type="GO" id="GO:0003735">
    <property type="term" value="F:structural constituent of ribosome"/>
    <property type="evidence" value="ECO:0007669"/>
    <property type="project" value="InterPro"/>
</dbReference>
<dbReference type="GO" id="GO:0006412">
    <property type="term" value="P:translation"/>
    <property type="evidence" value="ECO:0007669"/>
    <property type="project" value="UniProtKB-UniRule"/>
</dbReference>
<dbReference type="CDD" id="cd01425">
    <property type="entry name" value="RPS2"/>
    <property type="match status" value="1"/>
</dbReference>
<dbReference type="FunFam" id="1.10.287.610:FF:000001">
    <property type="entry name" value="30S ribosomal protein S2"/>
    <property type="match status" value="1"/>
</dbReference>
<dbReference type="Gene3D" id="3.40.50.10490">
    <property type="entry name" value="Glucose-6-phosphate isomerase like protein, domain 1"/>
    <property type="match status" value="1"/>
</dbReference>
<dbReference type="Gene3D" id="1.10.287.610">
    <property type="entry name" value="Helix hairpin bin"/>
    <property type="match status" value="1"/>
</dbReference>
<dbReference type="HAMAP" id="MF_00291_B">
    <property type="entry name" value="Ribosomal_uS2_B"/>
    <property type="match status" value="1"/>
</dbReference>
<dbReference type="InterPro" id="IPR001865">
    <property type="entry name" value="Ribosomal_uS2"/>
</dbReference>
<dbReference type="InterPro" id="IPR005706">
    <property type="entry name" value="Ribosomal_uS2_bac/mit/plastid"/>
</dbReference>
<dbReference type="InterPro" id="IPR018130">
    <property type="entry name" value="Ribosomal_uS2_CS"/>
</dbReference>
<dbReference type="InterPro" id="IPR023591">
    <property type="entry name" value="Ribosomal_uS2_flav_dom_sf"/>
</dbReference>
<dbReference type="NCBIfam" id="TIGR01011">
    <property type="entry name" value="rpsB_bact"/>
    <property type="match status" value="1"/>
</dbReference>
<dbReference type="PANTHER" id="PTHR12534">
    <property type="entry name" value="30S RIBOSOMAL PROTEIN S2 PROKARYOTIC AND ORGANELLAR"/>
    <property type="match status" value="1"/>
</dbReference>
<dbReference type="PANTHER" id="PTHR12534:SF0">
    <property type="entry name" value="SMALL RIBOSOMAL SUBUNIT PROTEIN US2M"/>
    <property type="match status" value="1"/>
</dbReference>
<dbReference type="Pfam" id="PF00318">
    <property type="entry name" value="Ribosomal_S2"/>
    <property type="match status" value="1"/>
</dbReference>
<dbReference type="PRINTS" id="PR00395">
    <property type="entry name" value="RIBOSOMALS2"/>
</dbReference>
<dbReference type="SUPFAM" id="SSF52313">
    <property type="entry name" value="Ribosomal protein S2"/>
    <property type="match status" value="1"/>
</dbReference>
<dbReference type="PROSITE" id="PS00963">
    <property type="entry name" value="RIBOSOMAL_S2_2"/>
    <property type="match status" value="1"/>
</dbReference>
<comment type="similarity">
    <text evidence="1">Belongs to the universal ribosomal protein uS2 family.</text>
</comment>
<evidence type="ECO:0000255" key="1">
    <source>
        <dbReference type="HAMAP-Rule" id="MF_00291"/>
    </source>
</evidence>
<evidence type="ECO:0000305" key="2"/>
<gene>
    <name evidence="1" type="primary">rpsB</name>
    <name type="ordered locus">APJL_0559</name>
</gene>